<reference key="1">
    <citation type="journal article" date="2008" name="J. Bacteriol.">
        <title>Comparative genome sequence analysis of multidrug-resistant Acinetobacter baumannii.</title>
        <authorList>
            <person name="Adams M.D."/>
            <person name="Goglin K."/>
            <person name="Molyneaux N."/>
            <person name="Hujer K.M."/>
            <person name="Lavender H."/>
            <person name="Jamison J.J."/>
            <person name="MacDonald I.J."/>
            <person name="Martin K.M."/>
            <person name="Russo T."/>
            <person name="Campagnari A.A."/>
            <person name="Hujer A.M."/>
            <person name="Bonomo R.A."/>
            <person name="Gill S.R."/>
        </authorList>
    </citation>
    <scope>NUCLEOTIDE SEQUENCE [LARGE SCALE GENOMIC DNA]</scope>
    <source>
        <strain>AB307-0294</strain>
    </source>
</reference>
<comment type="function">
    <text evidence="1">Catalyzes the phosphorylation of the position 2 hydroxy group of 4-diphosphocytidyl-2C-methyl-D-erythritol.</text>
</comment>
<comment type="catalytic activity">
    <reaction evidence="1">
        <text>4-CDP-2-C-methyl-D-erythritol + ATP = 4-CDP-2-C-methyl-D-erythritol 2-phosphate + ADP + H(+)</text>
        <dbReference type="Rhea" id="RHEA:18437"/>
        <dbReference type="ChEBI" id="CHEBI:15378"/>
        <dbReference type="ChEBI" id="CHEBI:30616"/>
        <dbReference type="ChEBI" id="CHEBI:57823"/>
        <dbReference type="ChEBI" id="CHEBI:57919"/>
        <dbReference type="ChEBI" id="CHEBI:456216"/>
        <dbReference type="EC" id="2.7.1.148"/>
    </reaction>
</comment>
<comment type="pathway">
    <text evidence="1">Isoprenoid biosynthesis; isopentenyl diphosphate biosynthesis via DXP pathway; isopentenyl diphosphate from 1-deoxy-D-xylulose 5-phosphate: step 3/6.</text>
</comment>
<comment type="similarity">
    <text evidence="1">Belongs to the GHMP kinase family. IspE subfamily.</text>
</comment>
<protein>
    <recommendedName>
        <fullName evidence="1">4-diphosphocytidyl-2-C-methyl-D-erythritol kinase</fullName>
        <shortName evidence="1">CMK</shortName>
        <ecNumber evidence="1">2.7.1.148</ecNumber>
    </recommendedName>
    <alternativeName>
        <fullName evidence="1">4-(cytidine-5'-diphospho)-2-C-methyl-D-erythritol kinase</fullName>
    </alternativeName>
</protein>
<sequence length="277" mass="31067">MIRVPSPAKLNLFLHITGRRENGYHELQTIFQLIDLYDWMTFTPISEDEIQIEGLGEVQLEQNLIYRAAQILRPHAQNPCGLHIKIEKNIPMGAGLGGGSSNAATTLIVLNQLWQCGLTEEQLAQFGVKLGADVPIFIYGLNAWAEGIGEHLSFIDLDQKQFIVLKPDCFISTQLLFSQKTLTRDSKPTTFCAYQLEPSNFGNNFEPLARELYPEVEEAMQYLDQFGHAKLTGTGACVFAEVTDEMNVDDILKHAPCKAYLVHSLKESPLRHFKVAS</sequence>
<gene>
    <name evidence="1" type="primary">ispE</name>
    <name type="ordered locus">ABBFA_002778</name>
</gene>
<feature type="chain" id="PRO_1000190675" description="4-diphosphocytidyl-2-C-methyl-D-erythritol kinase">
    <location>
        <begin position="1"/>
        <end position="277"/>
    </location>
</feature>
<feature type="active site" evidence="1">
    <location>
        <position position="9"/>
    </location>
</feature>
<feature type="active site" evidence="1">
    <location>
        <position position="133"/>
    </location>
</feature>
<feature type="binding site" evidence="1">
    <location>
        <begin position="91"/>
        <end position="101"/>
    </location>
    <ligand>
        <name>ATP</name>
        <dbReference type="ChEBI" id="CHEBI:30616"/>
    </ligand>
</feature>
<proteinExistence type="inferred from homology"/>
<accession>B7GYQ7</accession>
<evidence type="ECO:0000255" key="1">
    <source>
        <dbReference type="HAMAP-Rule" id="MF_00061"/>
    </source>
</evidence>
<organism>
    <name type="scientific">Acinetobacter baumannii (strain AB307-0294)</name>
    <dbReference type="NCBI Taxonomy" id="557600"/>
    <lineage>
        <taxon>Bacteria</taxon>
        <taxon>Pseudomonadati</taxon>
        <taxon>Pseudomonadota</taxon>
        <taxon>Gammaproteobacteria</taxon>
        <taxon>Moraxellales</taxon>
        <taxon>Moraxellaceae</taxon>
        <taxon>Acinetobacter</taxon>
        <taxon>Acinetobacter calcoaceticus/baumannii complex</taxon>
    </lineage>
</organism>
<dbReference type="EC" id="2.7.1.148" evidence="1"/>
<dbReference type="EMBL" id="CP001172">
    <property type="protein sequence ID" value="ACJ57085.1"/>
    <property type="molecule type" value="Genomic_DNA"/>
</dbReference>
<dbReference type="RefSeq" id="WP_000621866.1">
    <property type="nucleotide sequence ID" value="NZ_CP001172.1"/>
</dbReference>
<dbReference type="SMR" id="B7GYQ7"/>
<dbReference type="GeneID" id="92892765"/>
<dbReference type="HOGENOM" id="CLU_053057_3_0_6"/>
<dbReference type="UniPathway" id="UPA00056">
    <property type="reaction ID" value="UER00094"/>
</dbReference>
<dbReference type="Proteomes" id="UP000006924">
    <property type="component" value="Chromosome"/>
</dbReference>
<dbReference type="GO" id="GO:0050515">
    <property type="term" value="F:4-(cytidine 5'-diphospho)-2-C-methyl-D-erythritol kinase activity"/>
    <property type="evidence" value="ECO:0007669"/>
    <property type="project" value="UniProtKB-UniRule"/>
</dbReference>
<dbReference type="GO" id="GO:0005524">
    <property type="term" value="F:ATP binding"/>
    <property type="evidence" value="ECO:0007669"/>
    <property type="project" value="UniProtKB-UniRule"/>
</dbReference>
<dbReference type="GO" id="GO:0019288">
    <property type="term" value="P:isopentenyl diphosphate biosynthetic process, methylerythritol 4-phosphate pathway"/>
    <property type="evidence" value="ECO:0007669"/>
    <property type="project" value="UniProtKB-UniRule"/>
</dbReference>
<dbReference type="GO" id="GO:0016114">
    <property type="term" value="P:terpenoid biosynthetic process"/>
    <property type="evidence" value="ECO:0007669"/>
    <property type="project" value="InterPro"/>
</dbReference>
<dbReference type="Gene3D" id="3.30.230.10">
    <property type="match status" value="1"/>
</dbReference>
<dbReference type="Gene3D" id="3.30.70.890">
    <property type="entry name" value="GHMP kinase, C-terminal domain"/>
    <property type="match status" value="1"/>
</dbReference>
<dbReference type="HAMAP" id="MF_00061">
    <property type="entry name" value="IspE"/>
    <property type="match status" value="1"/>
</dbReference>
<dbReference type="InterPro" id="IPR013750">
    <property type="entry name" value="GHMP_kinase_C_dom"/>
</dbReference>
<dbReference type="InterPro" id="IPR036554">
    <property type="entry name" value="GHMP_kinase_C_sf"/>
</dbReference>
<dbReference type="InterPro" id="IPR006204">
    <property type="entry name" value="GHMP_kinase_N_dom"/>
</dbReference>
<dbReference type="InterPro" id="IPR004424">
    <property type="entry name" value="IspE"/>
</dbReference>
<dbReference type="InterPro" id="IPR020568">
    <property type="entry name" value="Ribosomal_Su5_D2-typ_SF"/>
</dbReference>
<dbReference type="InterPro" id="IPR014721">
    <property type="entry name" value="Ribsml_uS5_D2-typ_fold_subgr"/>
</dbReference>
<dbReference type="NCBIfam" id="TIGR00154">
    <property type="entry name" value="ispE"/>
    <property type="match status" value="1"/>
</dbReference>
<dbReference type="PANTHER" id="PTHR43527">
    <property type="entry name" value="4-DIPHOSPHOCYTIDYL-2-C-METHYL-D-ERYTHRITOL KINASE, CHLOROPLASTIC"/>
    <property type="match status" value="1"/>
</dbReference>
<dbReference type="PANTHER" id="PTHR43527:SF2">
    <property type="entry name" value="4-DIPHOSPHOCYTIDYL-2-C-METHYL-D-ERYTHRITOL KINASE, CHLOROPLASTIC"/>
    <property type="match status" value="1"/>
</dbReference>
<dbReference type="Pfam" id="PF08544">
    <property type="entry name" value="GHMP_kinases_C"/>
    <property type="match status" value="1"/>
</dbReference>
<dbReference type="Pfam" id="PF00288">
    <property type="entry name" value="GHMP_kinases_N"/>
    <property type="match status" value="1"/>
</dbReference>
<dbReference type="PIRSF" id="PIRSF010376">
    <property type="entry name" value="IspE"/>
    <property type="match status" value="1"/>
</dbReference>
<dbReference type="SUPFAM" id="SSF55060">
    <property type="entry name" value="GHMP Kinase, C-terminal domain"/>
    <property type="match status" value="1"/>
</dbReference>
<dbReference type="SUPFAM" id="SSF54211">
    <property type="entry name" value="Ribosomal protein S5 domain 2-like"/>
    <property type="match status" value="1"/>
</dbReference>
<name>ISPE_ACIB3</name>
<keyword id="KW-0067">ATP-binding</keyword>
<keyword id="KW-0414">Isoprene biosynthesis</keyword>
<keyword id="KW-0418">Kinase</keyword>
<keyword id="KW-0547">Nucleotide-binding</keyword>
<keyword id="KW-0808">Transferase</keyword>